<dbReference type="EC" id="2.1.1.173" evidence="1"/>
<dbReference type="EC" id="2.1.1.264" evidence="1"/>
<dbReference type="EMBL" id="CP000282">
    <property type="protein sequence ID" value="ABD81012.1"/>
    <property type="molecule type" value="Genomic_DNA"/>
</dbReference>
<dbReference type="RefSeq" id="WP_011468232.1">
    <property type="nucleotide sequence ID" value="NC_007912.1"/>
</dbReference>
<dbReference type="SMR" id="Q21JW7"/>
<dbReference type="STRING" id="203122.Sde_1752"/>
<dbReference type="GeneID" id="98613425"/>
<dbReference type="KEGG" id="sde:Sde_1752"/>
<dbReference type="eggNOG" id="COG0116">
    <property type="taxonomic scope" value="Bacteria"/>
</dbReference>
<dbReference type="eggNOG" id="COG1092">
    <property type="taxonomic scope" value="Bacteria"/>
</dbReference>
<dbReference type="HOGENOM" id="CLU_014042_2_0_6"/>
<dbReference type="OrthoDB" id="9809404at2"/>
<dbReference type="Proteomes" id="UP000001947">
    <property type="component" value="Chromosome"/>
</dbReference>
<dbReference type="GO" id="GO:0005737">
    <property type="term" value="C:cytoplasm"/>
    <property type="evidence" value="ECO:0007669"/>
    <property type="project" value="UniProtKB-SubCell"/>
</dbReference>
<dbReference type="GO" id="GO:0052915">
    <property type="term" value="F:23S rRNA (guanine(2445)-N(2))-methyltransferase activity"/>
    <property type="evidence" value="ECO:0007669"/>
    <property type="project" value="UniProtKB-UniRule"/>
</dbReference>
<dbReference type="GO" id="GO:0003723">
    <property type="term" value="F:RNA binding"/>
    <property type="evidence" value="ECO:0007669"/>
    <property type="project" value="UniProtKB-KW"/>
</dbReference>
<dbReference type="GO" id="GO:0070043">
    <property type="term" value="F:rRNA (guanine-N7-)-methyltransferase activity"/>
    <property type="evidence" value="ECO:0007669"/>
    <property type="project" value="UniProtKB-UniRule"/>
</dbReference>
<dbReference type="CDD" id="cd02440">
    <property type="entry name" value="AdoMet_MTases"/>
    <property type="match status" value="1"/>
</dbReference>
<dbReference type="CDD" id="cd11715">
    <property type="entry name" value="THUMP_AdoMetMT"/>
    <property type="match status" value="1"/>
</dbReference>
<dbReference type="Gene3D" id="3.30.2130.30">
    <property type="match status" value="1"/>
</dbReference>
<dbReference type="Gene3D" id="3.30.750.80">
    <property type="entry name" value="RNA methyltransferase domain (HRMD) like"/>
    <property type="match status" value="1"/>
</dbReference>
<dbReference type="Gene3D" id="3.40.50.150">
    <property type="entry name" value="Vaccinia Virus protein VP39"/>
    <property type="match status" value="2"/>
</dbReference>
<dbReference type="HAMAP" id="MF_01858">
    <property type="entry name" value="23SrRNA_methyltr_KL"/>
    <property type="match status" value="1"/>
</dbReference>
<dbReference type="InterPro" id="IPR017244">
    <property type="entry name" value="23SrRNA_methyltr_KL"/>
</dbReference>
<dbReference type="InterPro" id="IPR000241">
    <property type="entry name" value="RlmKL-like_Mtase"/>
</dbReference>
<dbReference type="InterPro" id="IPR053943">
    <property type="entry name" value="RlmKL-like_Mtase_CS"/>
</dbReference>
<dbReference type="InterPro" id="IPR054170">
    <property type="entry name" value="RlmL_1st"/>
</dbReference>
<dbReference type="InterPro" id="IPR019614">
    <property type="entry name" value="SAM-dep_methyl-trfase"/>
</dbReference>
<dbReference type="InterPro" id="IPR029063">
    <property type="entry name" value="SAM-dependent_MTases_sf"/>
</dbReference>
<dbReference type="InterPro" id="IPR004114">
    <property type="entry name" value="THUMP_dom"/>
</dbReference>
<dbReference type="NCBIfam" id="NF008748">
    <property type="entry name" value="PRK11783.1"/>
    <property type="match status" value="1"/>
</dbReference>
<dbReference type="PANTHER" id="PTHR47313">
    <property type="entry name" value="RIBOSOMAL RNA LARGE SUBUNIT METHYLTRANSFERASE K/L"/>
    <property type="match status" value="1"/>
</dbReference>
<dbReference type="PANTHER" id="PTHR47313:SF1">
    <property type="entry name" value="RIBOSOMAL RNA LARGE SUBUNIT METHYLTRANSFERASE K_L"/>
    <property type="match status" value="1"/>
</dbReference>
<dbReference type="Pfam" id="PF10672">
    <property type="entry name" value="Methyltrans_SAM"/>
    <property type="match status" value="1"/>
</dbReference>
<dbReference type="Pfam" id="PF22020">
    <property type="entry name" value="RlmL_1st"/>
    <property type="match status" value="1"/>
</dbReference>
<dbReference type="Pfam" id="PF02926">
    <property type="entry name" value="THUMP"/>
    <property type="match status" value="1"/>
</dbReference>
<dbReference type="Pfam" id="PF01170">
    <property type="entry name" value="UPF0020"/>
    <property type="match status" value="1"/>
</dbReference>
<dbReference type="PIRSF" id="PIRSF037618">
    <property type="entry name" value="RNA_Mtase_bacteria_prd"/>
    <property type="match status" value="1"/>
</dbReference>
<dbReference type="SMART" id="SM00981">
    <property type="entry name" value="THUMP"/>
    <property type="match status" value="1"/>
</dbReference>
<dbReference type="SUPFAM" id="SSF53335">
    <property type="entry name" value="S-adenosyl-L-methionine-dependent methyltransferases"/>
    <property type="match status" value="2"/>
</dbReference>
<dbReference type="PROSITE" id="PS51165">
    <property type="entry name" value="THUMP"/>
    <property type="match status" value="1"/>
</dbReference>
<dbReference type="PROSITE" id="PS01261">
    <property type="entry name" value="UPF0020"/>
    <property type="match status" value="1"/>
</dbReference>
<sequence>MPTETNQNTTQYDLFVSCSQGWEGLLQTELEQLAVGDVKPGHAGVYVSATLEQMYKICLWTRLATKVLLPLDSGPIETGDDVHTVASKVDWPSLMKPGASLKVDFIGTNDAVRNTQFGAQRVKDAVVDSIRHAGGERPNVEKMQPDVRIHARLHRDELHISIDLSGDSLHRRGYRQKQGGAPLKENLAAALLLRAGWPTIAEQGGALLDPMCGSGTLLIEGALIAYSIAPGLSRDKFGFECWTGHNADTWAQVVNDAKAIRDKNLQEKSFDIFGYDSDYYVTKAAEMNCEALGLQNVIHIANKPVEELKQPTHKVLVPGLVIVNPPYGERLGEVNELRTTYQILAHQVKQQFEGWTFAVFTSNPELAKETRLRANKKNKFKNGALPAELFVYSVLSADDAKLRKDKLTQAVQTDEDGQVENASGAWVRKNLCDKPLTEAATMVANRIKKNLKRLKKSVKQNDWHGYRVYDADMPEYSAAIDLYNDQVHIQEYAAPKTIDADKAEARFETLKHGAAVALQAPDNKLFVKTRKRNKGKAQYEKQTDTQGFDAERCIQVQEGNAKLWVNLQDYLDTGLFLDHRPLRMRIHKEATGKRFLNLFCYTATASVQAALGGATESVSVDMSNTYLEWADNNFRLNNVHLARHRLVRADCFDWLNKCREGFDLIMLDPPTFSNSKKMSDVLDIQKDQVRLISRCMDILNPGGTLYFSTNFRQFKLDEQISTRYVVENISAATIDEDFKGNPKIHYCWKIQH</sequence>
<comment type="function">
    <text evidence="1">Specifically methylates the guanine in position 2445 (m2G2445) and the guanine in position 2069 (m7G2069) of 23S rRNA.</text>
</comment>
<comment type="catalytic activity">
    <reaction evidence="1">
        <text>guanosine(2445) in 23S rRNA + S-adenosyl-L-methionine = N(2)-methylguanosine(2445) in 23S rRNA + S-adenosyl-L-homocysteine + H(+)</text>
        <dbReference type="Rhea" id="RHEA:42740"/>
        <dbReference type="Rhea" id="RHEA-COMP:10215"/>
        <dbReference type="Rhea" id="RHEA-COMP:10216"/>
        <dbReference type="ChEBI" id="CHEBI:15378"/>
        <dbReference type="ChEBI" id="CHEBI:57856"/>
        <dbReference type="ChEBI" id="CHEBI:59789"/>
        <dbReference type="ChEBI" id="CHEBI:74269"/>
        <dbReference type="ChEBI" id="CHEBI:74481"/>
        <dbReference type="EC" id="2.1.1.173"/>
    </reaction>
</comment>
<comment type="catalytic activity">
    <reaction evidence="1">
        <text>guanosine(2069) in 23S rRNA + S-adenosyl-L-methionine = N(2)-methylguanosine(2069) in 23S rRNA + S-adenosyl-L-homocysteine + H(+)</text>
        <dbReference type="Rhea" id="RHEA:43772"/>
        <dbReference type="Rhea" id="RHEA-COMP:10688"/>
        <dbReference type="Rhea" id="RHEA-COMP:10689"/>
        <dbReference type="ChEBI" id="CHEBI:15378"/>
        <dbReference type="ChEBI" id="CHEBI:57856"/>
        <dbReference type="ChEBI" id="CHEBI:59789"/>
        <dbReference type="ChEBI" id="CHEBI:74269"/>
        <dbReference type="ChEBI" id="CHEBI:74481"/>
        <dbReference type="EC" id="2.1.1.264"/>
    </reaction>
</comment>
<comment type="subcellular location">
    <subcellularLocation>
        <location evidence="1">Cytoplasm</location>
    </subcellularLocation>
</comment>
<comment type="similarity">
    <text evidence="1">Belongs to the methyltransferase superfamily. RlmKL family.</text>
</comment>
<protein>
    <recommendedName>
        <fullName evidence="1">Ribosomal RNA large subunit methyltransferase K/L</fullName>
    </recommendedName>
    <domain>
        <recommendedName>
            <fullName evidence="1">23S rRNA m2G2445 methyltransferase</fullName>
            <ecNumber evidence="1">2.1.1.173</ecNumber>
        </recommendedName>
        <alternativeName>
            <fullName evidence="1">rRNA (guanine-N(2)-)-methyltransferase RlmL</fullName>
        </alternativeName>
    </domain>
    <domain>
        <recommendedName>
            <fullName evidence="1">23S rRNA m7G2069 methyltransferase</fullName>
            <ecNumber evidence="1">2.1.1.264</ecNumber>
        </recommendedName>
        <alternativeName>
            <fullName evidence="1">rRNA (guanine-N(7)-)-methyltransferase RlmK</fullName>
        </alternativeName>
    </domain>
</protein>
<keyword id="KW-0963">Cytoplasm</keyword>
<keyword id="KW-0489">Methyltransferase</keyword>
<keyword id="KW-1185">Reference proteome</keyword>
<keyword id="KW-0694">RNA-binding</keyword>
<keyword id="KW-0698">rRNA processing</keyword>
<keyword id="KW-0949">S-adenosyl-L-methionine</keyword>
<keyword id="KW-0808">Transferase</keyword>
<name>RLMKL_SACD2</name>
<evidence type="ECO:0000255" key="1">
    <source>
        <dbReference type="HAMAP-Rule" id="MF_01858"/>
    </source>
</evidence>
<proteinExistence type="inferred from homology"/>
<gene>
    <name evidence="1" type="primary">rlmL</name>
    <name type="ordered locus">Sde_1752</name>
</gene>
<feature type="chain" id="PRO_0000366803" description="Ribosomal RNA large subunit methyltransferase K/L">
    <location>
        <begin position="1"/>
        <end position="752"/>
    </location>
</feature>
<feature type="domain" description="THUMP" evidence="1">
    <location>
        <begin position="53"/>
        <end position="164"/>
    </location>
</feature>
<reference key="1">
    <citation type="journal article" date="2008" name="PLoS Genet.">
        <title>Complete genome sequence of the complex carbohydrate-degrading marine bacterium, Saccharophagus degradans strain 2-40 T.</title>
        <authorList>
            <person name="Weiner R.M."/>
            <person name="Taylor L.E. II"/>
            <person name="Henrissat B."/>
            <person name="Hauser L."/>
            <person name="Land M."/>
            <person name="Coutinho P.M."/>
            <person name="Rancurel C."/>
            <person name="Saunders E.H."/>
            <person name="Longmire A.G."/>
            <person name="Zhang H."/>
            <person name="Bayer E.A."/>
            <person name="Gilbert H.J."/>
            <person name="Larimer F."/>
            <person name="Zhulin I.B."/>
            <person name="Ekborg N.A."/>
            <person name="Lamed R."/>
            <person name="Richardson P.M."/>
            <person name="Borovok I."/>
            <person name="Hutcheson S."/>
        </authorList>
    </citation>
    <scope>NUCLEOTIDE SEQUENCE [LARGE SCALE GENOMIC DNA]</scope>
    <source>
        <strain>2-40 / ATCC 43961 / DSM 17024</strain>
    </source>
</reference>
<organism>
    <name type="scientific">Saccharophagus degradans (strain 2-40 / ATCC 43961 / DSM 17024)</name>
    <dbReference type="NCBI Taxonomy" id="203122"/>
    <lineage>
        <taxon>Bacteria</taxon>
        <taxon>Pseudomonadati</taxon>
        <taxon>Pseudomonadota</taxon>
        <taxon>Gammaproteobacteria</taxon>
        <taxon>Cellvibrionales</taxon>
        <taxon>Cellvibrionaceae</taxon>
        <taxon>Saccharophagus</taxon>
    </lineage>
</organism>
<accession>Q21JW7</accession>